<organism>
    <name type="scientific">Schizosaccharomyces pombe (strain 972 / ATCC 24843)</name>
    <name type="common">Fission yeast</name>
    <dbReference type="NCBI Taxonomy" id="284812"/>
    <lineage>
        <taxon>Eukaryota</taxon>
        <taxon>Fungi</taxon>
        <taxon>Dikarya</taxon>
        <taxon>Ascomycota</taxon>
        <taxon>Taphrinomycotina</taxon>
        <taxon>Schizosaccharomycetes</taxon>
        <taxon>Schizosaccharomycetales</taxon>
        <taxon>Schizosaccharomycetaceae</taxon>
        <taxon>Schizosaccharomyces</taxon>
    </lineage>
</organism>
<proteinExistence type="evidence at protein level"/>
<keyword id="KW-0539">Nucleus</keyword>
<keyword id="KW-0597">Phosphoprotein</keyword>
<keyword id="KW-1185">Reference proteome</keyword>
<gene>
    <name evidence="5" type="primary">mpp6</name>
    <name type="ORF">SPAC2E11.11c</name>
    <name type="ORF">SPACUNK4.11c</name>
</gene>
<sequence length="188" mass="21505">MSSKLLSMKFMQRARGIDPKQAEEELSKNIVTDEHWSLAGKVDFLPQKMTRNVEYESGYGGLIEENDLESHSNEPNLVQGRASFGLFNKELGEENVDEKDVSKNEEVDVNGTKITDTSELTERERRKQELVSKKAEASRKMEVKAPAKESKKRKVNELSQDVISLHSPKESNARKTKKNKNKKKKKRN</sequence>
<comment type="function">
    <text evidence="1">RNA-binding protein that associates with the RNA exosome complex.</text>
</comment>
<comment type="subunit">
    <text evidence="1">Associates with the RNA exosome complex.</text>
</comment>
<comment type="subcellular location">
    <subcellularLocation>
        <location evidence="1">Nucleus</location>
    </subcellularLocation>
    <text>Colocalizes with the nuclear exosome and ribosomes.</text>
</comment>
<comment type="similarity">
    <text evidence="4">Belongs to the MPP6 family.</text>
</comment>
<name>MPP6_SCHPO</name>
<protein>
    <recommendedName>
        <fullName evidence="4">M-phase phosphoprotein 6 homolog</fullName>
    </recommendedName>
    <alternativeName>
        <fullName>Exosome-associated RNA binding protein Mpp6</fullName>
    </alternativeName>
</protein>
<reference key="1">
    <citation type="journal article" date="2002" name="Nature">
        <title>The genome sequence of Schizosaccharomyces pombe.</title>
        <authorList>
            <person name="Wood V."/>
            <person name="Gwilliam R."/>
            <person name="Rajandream M.A."/>
            <person name="Lyne M.H."/>
            <person name="Lyne R."/>
            <person name="Stewart A."/>
            <person name="Sgouros J.G."/>
            <person name="Peat N."/>
            <person name="Hayles J."/>
            <person name="Baker S.G."/>
            <person name="Basham D."/>
            <person name="Bowman S."/>
            <person name="Brooks K."/>
            <person name="Brown D."/>
            <person name="Brown S."/>
            <person name="Chillingworth T."/>
            <person name="Churcher C.M."/>
            <person name="Collins M."/>
            <person name="Connor R."/>
            <person name="Cronin A."/>
            <person name="Davis P."/>
            <person name="Feltwell T."/>
            <person name="Fraser A."/>
            <person name="Gentles S."/>
            <person name="Goble A."/>
            <person name="Hamlin N."/>
            <person name="Harris D.E."/>
            <person name="Hidalgo J."/>
            <person name="Hodgson G."/>
            <person name="Holroyd S."/>
            <person name="Hornsby T."/>
            <person name="Howarth S."/>
            <person name="Huckle E.J."/>
            <person name="Hunt S."/>
            <person name="Jagels K."/>
            <person name="James K.D."/>
            <person name="Jones L."/>
            <person name="Jones M."/>
            <person name="Leather S."/>
            <person name="McDonald S."/>
            <person name="McLean J."/>
            <person name="Mooney P."/>
            <person name="Moule S."/>
            <person name="Mungall K.L."/>
            <person name="Murphy L.D."/>
            <person name="Niblett D."/>
            <person name="Odell C."/>
            <person name="Oliver K."/>
            <person name="O'Neil S."/>
            <person name="Pearson D."/>
            <person name="Quail M.A."/>
            <person name="Rabbinowitsch E."/>
            <person name="Rutherford K.M."/>
            <person name="Rutter S."/>
            <person name="Saunders D."/>
            <person name="Seeger K."/>
            <person name="Sharp S."/>
            <person name="Skelton J."/>
            <person name="Simmonds M.N."/>
            <person name="Squares R."/>
            <person name="Squares S."/>
            <person name="Stevens K."/>
            <person name="Taylor K."/>
            <person name="Taylor R.G."/>
            <person name="Tivey A."/>
            <person name="Walsh S.V."/>
            <person name="Warren T."/>
            <person name="Whitehead S."/>
            <person name="Woodward J.R."/>
            <person name="Volckaert G."/>
            <person name="Aert R."/>
            <person name="Robben J."/>
            <person name="Grymonprez B."/>
            <person name="Weltjens I."/>
            <person name="Vanstreels E."/>
            <person name="Rieger M."/>
            <person name="Schaefer M."/>
            <person name="Mueller-Auer S."/>
            <person name="Gabel C."/>
            <person name="Fuchs M."/>
            <person name="Duesterhoeft A."/>
            <person name="Fritzc C."/>
            <person name="Holzer E."/>
            <person name="Moestl D."/>
            <person name="Hilbert H."/>
            <person name="Borzym K."/>
            <person name="Langer I."/>
            <person name="Beck A."/>
            <person name="Lehrach H."/>
            <person name="Reinhardt R."/>
            <person name="Pohl T.M."/>
            <person name="Eger P."/>
            <person name="Zimmermann W."/>
            <person name="Wedler H."/>
            <person name="Wambutt R."/>
            <person name="Purnelle B."/>
            <person name="Goffeau A."/>
            <person name="Cadieu E."/>
            <person name="Dreano S."/>
            <person name="Gloux S."/>
            <person name="Lelaure V."/>
            <person name="Mottier S."/>
            <person name="Galibert F."/>
            <person name="Aves S.J."/>
            <person name="Xiang Z."/>
            <person name="Hunt C."/>
            <person name="Moore K."/>
            <person name="Hurst S.M."/>
            <person name="Lucas M."/>
            <person name="Rochet M."/>
            <person name="Gaillardin C."/>
            <person name="Tallada V.A."/>
            <person name="Garzon A."/>
            <person name="Thode G."/>
            <person name="Daga R.R."/>
            <person name="Cruzado L."/>
            <person name="Jimenez J."/>
            <person name="Sanchez M."/>
            <person name="del Rey F."/>
            <person name="Benito J."/>
            <person name="Dominguez A."/>
            <person name="Revuelta J.L."/>
            <person name="Moreno S."/>
            <person name="Armstrong J."/>
            <person name="Forsburg S.L."/>
            <person name="Cerutti L."/>
            <person name="Lowe T."/>
            <person name="McCombie W.R."/>
            <person name="Paulsen I."/>
            <person name="Potashkin J."/>
            <person name="Shpakovski G.V."/>
            <person name="Ussery D."/>
            <person name="Barrell B.G."/>
            <person name="Nurse P."/>
        </authorList>
    </citation>
    <scope>NUCLEOTIDE SEQUENCE [LARGE SCALE GENOMIC DNA]</scope>
    <source>
        <strain>972 / ATCC 24843</strain>
    </source>
</reference>
<reference key="2">
    <citation type="journal article" date="2008" name="J. Proteome Res.">
        <title>Phosphoproteome analysis of fission yeast.</title>
        <authorList>
            <person name="Wilson-Grady J.T."/>
            <person name="Villen J."/>
            <person name="Gygi S.P."/>
        </authorList>
    </citation>
    <scope>PHOSPHORYLATION [LARGE SCALE ANALYSIS] AT SER-167</scope>
    <scope>IDENTIFICATION BY MASS SPECTROMETRY</scope>
</reference>
<accession>O14076</accession>
<dbReference type="EMBL" id="CU329670">
    <property type="protein sequence ID" value="CAA20141.1"/>
    <property type="molecule type" value="Genomic_DNA"/>
</dbReference>
<dbReference type="PIR" id="T41706">
    <property type="entry name" value="T41706"/>
</dbReference>
<dbReference type="RefSeq" id="NP_593967.1">
    <property type="nucleotide sequence ID" value="NM_001019394.2"/>
</dbReference>
<dbReference type="BioGRID" id="278688">
    <property type="interactions" value="24"/>
</dbReference>
<dbReference type="FunCoup" id="O14076">
    <property type="interactions" value="63"/>
</dbReference>
<dbReference type="STRING" id="284812.O14076"/>
<dbReference type="iPTMnet" id="O14076"/>
<dbReference type="PaxDb" id="4896-SPACUNK4.11c.1"/>
<dbReference type="EnsemblFungi" id="SPACUNK4.11c.1">
    <property type="protein sequence ID" value="SPACUNK4.11c.1:pep"/>
    <property type="gene ID" value="SPACUNK4.11c"/>
</dbReference>
<dbReference type="GeneID" id="2542214"/>
<dbReference type="KEGG" id="spo:2542214"/>
<dbReference type="PomBase" id="SPACUNK4.11c">
    <property type="gene designation" value="mpp6"/>
</dbReference>
<dbReference type="VEuPathDB" id="FungiDB:SPACUNK4.11c"/>
<dbReference type="HOGENOM" id="CLU_1455211_0_0_1"/>
<dbReference type="InParanoid" id="O14076"/>
<dbReference type="OMA" id="APYKMEG"/>
<dbReference type="PhylomeDB" id="O14076"/>
<dbReference type="Reactome" id="R-SPO-6791226">
    <property type="pathway name" value="Major pathway of rRNA processing in the nucleolus and cytosol"/>
</dbReference>
<dbReference type="PRO" id="PR:O14076"/>
<dbReference type="Proteomes" id="UP000002485">
    <property type="component" value="Chromosome I"/>
</dbReference>
<dbReference type="GO" id="GO:0000176">
    <property type="term" value="C:nuclear exosome (RNase complex)"/>
    <property type="evidence" value="ECO:0000266"/>
    <property type="project" value="PomBase"/>
</dbReference>
<dbReference type="GO" id="GO:0005730">
    <property type="term" value="C:nucleolus"/>
    <property type="evidence" value="ECO:0007005"/>
    <property type="project" value="PomBase"/>
</dbReference>
<dbReference type="GO" id="GO:0005634">
    <property type="term" value="C:nucleus"/>
    <property type="evidence" value="ECO:0007005"/>
    <property type="project" value="PomBase"/>
</dbReference>
<dbReference type="GO" id="GO:0000460">
    <property type="term" value="P:maturation of 5.8S rRNA"/>
    <property type="evidence" value="ECO:0000318"/>
    <property type="project" value="GO_Central"/>
</dbReference>
<dbReference type="GO" id="GO:0071028">
    <property type="term" value="P:nuclear mRNA surveillance"/>
    <property type="evidence" value="ECO:0000266"/>
    <property type="project" value="PomBase"/>
</dbReference>
<dbReference type="GO" id="GO:0043633">
    <property type="term" value="P:polyadenylation-dependent RNA catabolic process"/>
    <property type="evidence" value="ECO:0000266"/>
    <property type="project" value="PomBase"/>
</dbReference>
<dbReference type="GO" id="GO:0006401">
    <property type="term" value="P:RNA catabolic process"/>
    <property type="evidence" value="ECO:0000314"/>
    <property type="project" value="PomBase"/>
</dbReference>
<dbReference type="InterPro" id="IPR019324">
    <property type="entry name" value="MPP6"/>
</dbReference>
<dbReference type="PANTHER" id="PTHR13582">
    <property type="entry name" value="M-PHASE PHOSPHOPROTEIN 6"/>
    <property type="match status" value="1"/>
</dbReference>
<dbReference type="PANTHER" id="PTHR13582:SF0">
    <property type="entry name" value="M-PHASE PHOSPHOPROTEIN 6"/>
    <property type="match status" value="1"/>
</dbReference>
<dbReference type="Pfam" id="PF10175">
    <property type="entry name" value="MPP6"/>
    <property type="match status" value="1"/>
</dbReference>
<feature type="chain" id="PRO_0000122440" description="M-phase phosphoprotein 6 homolog">
    <location>
        <begin position="1"/>
        <end position="188"/>
    </location>
</feature>
<feature type="region of interest" description="Disordered" evidence="2">
    <location>
        <begin position="93"/>
        <end position="188"/>
    </location>
</feature>
<feature type="compositionally biased region" description="Basic and acidic residues" evidence="2">
    <location>
        <begin position="120"/>
        <end position="149"/>
    </location>
</feature>
<feature type="compositionally biased region" description="Basic residues" evidence="2">
    <location>
        <begin position="174"/>
        <end position="188"/>
    </location>
</feature>
<feature type="modified residue" description="Phosphoserine" evidence="3">
    <location>
        <position position="167"/>
    </location>
</feature>
<evidence type="ECO:0000250" key="1">
    <source>
        <dbReference type="UniProtKB" id="Q99547"/>
    </source>
</evidence>
<evidence type="ECO:0000256" key="2">
    <source>
        <dbReference type="SAM" id="MobiDB-lite"/>
    </source>
</evidence>
<evidence type="ECO:0000269" key="3">
    <source>
    </source>
</evidence>
<evidence type="ECO:0000305" key="4"/>
<evidence type="ECO:0000312" key="5">
    <source>
        <dbReference type="PomBase" id="SPACUNK4.11c"/>
    </source>
</evidence>